<sequence>MGKIIGIDLGTTNSCVAIMDGTQARVLENAEGDRTTPSIIAYTQDGETLVGQPAKRQAVTNPQNTLFAIKRLIGRRFQDEEVQRDVSIMPYKIIGADNGDAWLDVKGQKMAPPQISAEVLKKMKKTAEDYLGEPVTEAVITVPAYFNDAQRQATKDAGRIAGLEVKRIINEPTAAALAYGLDKEVGNRTIAVYDLGGGTFDISIIEIDEVDGEKTFEVLATNGDTHLGGEDFDTRLINYLVDEFKKDQGIDLRNDPLAMQRLKEAAEKAKIELSSAQQTDVNLPYITADATGPKHMNIKVTRAKLESLVEDLVNRSIEPLKVALQDAGLSVSDINDVILVGGQTRMPMVQKKVAEFFGKEPRKDVNPDEAVAIGAAVQGGVLTGDVKDVLLLDVTPLSLGIETMGGVMTPLITKNTTIPTKHSQVFSTAEDNQSAVTIHVLQGERKRASDNKSLGQFNLDGINPAPRGMPQIEVTFDIDADGILHVSAKDKNSGKEQKITIKASSGLNEEEIQKMVRDAEANAESDRKFEELVQTRNQGDHLLHSTRKQVEEAGDKLPADDKTAIESALSALETALKGEDKAAIEAKMQELAQVSQKLMEIAQQQHAQQQAGSADASANNAKDDDVVDAEFEEVKDKK</sequence>
<gene>
    <name evidence="1" type="primary">dnaK</name>
    <name type="ordered locus">SeHA_C0013</name>
</gene>
<evidence type="ECO:0000255" key="1">
    <source>
        <dbReference type="HAMAP-Rule" id="MF_00332"/>
    </source>
</evidence>
<evidence type="ECO:0000256" key="2">
    <source>
        <dbReference type="SAM" id="MobiDB-lite"/>
    </source>
</evidence>
<reference key="1">
    <citation type="journal article" date="2011" name="J. Bacteriol.">
        <title>Comparative genomics of 28 Salmonella enterica isolates: evidence for CRISPR-mediated adaptive sublineage evolution.</title>
        <authorList>
            <person name="Fricke W.F."/>
            <person name="Mammel M.K."/>
            <person name="McDermott P.F."/>
            <person name="Tartera C."/>
            <person name="White D.G."/>
            <person name="Leclerc J.E."/>
            <person name="Ravel J."/>
            <person name="Cebula T.A."/>
        </authorList>
    </citation>
    <scope>NUCLEOTIDE SEQUENCE [LARGE SCALE GENOMIC DNA]</scope>
    <source>
        <strain>SL476</strain>
    </source>
</reference>
<dbReference type="EMBL" id="CP001120">
    <property type="protein sequence ID" value="ACF70388.1"/>
    <property type="molecule type" value="Genomic_DNA"/>
</dbReference>
<dbReference type="RefSeq" id="WP_000516126.1">
    <property type="nucleotide sequence ID" value="NC_011083.1"/>
</dbReference>
<dbReference type="SMR" id="B4TIB4"/>
<dbReference type="GeneID" id="66754552"/>
<dbReference type="KEGG" id="seh:SeHA_C0013"/>
<dbReference type="HOGENOM" id="CLU_005965_2_1_6"/>
<dbReference type="Proteomes" id="UP000001866">
    <property type="component" value="Chromosome"/>
</dbReference>
<dbReference type="GO" id="GO:0005524">
    <property type="term" value="F:ATP binding"/>
    <property type="evidence" value="ECO:0007669"/>
    <property type="project" value="UniProtKB-UniRule"/>
</dbReference>
<dbReference type="GO" id="GO:0140662">
    <property type="term" value="F:ATP-dependent protein folding chaperone"/>
    <property type="evidence" value="ECO:0007669"/>
    <property type="project" value="InterPro"/>
</dbReference>
<dbReference type="GO" id="GO:0051082">
    <property type="term" value="F:unfolded protein binding"/>
    <property type="evidence" value="ECO:0007669"/>
    <property type="project" value="InterPro"/>
</dbReference>
<dbReference type="CDD" id="cd10234">
    <property type="entry name" value="ASKHA_NBD_HSP70_DnaK-like"/>
    <property type="match status" value="1"/>
</dbReference>
<dbReference type="FunFam" id="2.60.34.10:FF:000014">
    <property type="entry name" value="Chaperone protein DnaK HSP70"/>
    <property type="match status" value="1"/>
</dbReference>
<dbReference type="FunFam" id="1.20.1270.10:FF:000001">
    <property type="entry name" value="Molecular chaperone DnaK"/>
    <property type="match status" value="1"/>
</dbReference>
<dbReference type="FunFam" id="3.30.420.40:FF:000004">
    <property type="entry name" value="Molecular chaperone DnaK"/>
    <property type="match status" value="1"/>
</dbReference>
<dbReference type="FunFam" id="3.90.640.10:FF:000003">
    <property type="entry name" value="Molecular chaperone DnaK"/>
    <property type="match status" value="1"/>
</dbReference>
<dbReference type="Gene3D" id="1.20.1270.10">
    <property type="match status" value="1"/>
</dbReference>
<dbReference type="Gene3D" id="3.30.420.40">
    <property type="match status" value="2"/>
</dbReference>
<dbReference type="Gene3D" id="3.90.640.10">
    <property type="entry name" value="Actin, Chain A, domain 4"/>
    <property type="match status" value="1"/>
</dbReference>
<dbReference type="Gene3D" id="2.60.34.10">
    <property type="entry name" value="Substrate Binding Domain Of DNAk, Chain A, domain 1"/>
    <property type="match status" value="1"/>
</dbReference>
<dbReference type="HAMAP" id="MF_00332">
    <property type="entry name" value="DnaK"/>
    <property type="match status" value="1"/>
</dbReference>
<dbReference type="InterPro" id="IPR043129">
    <property type="entry name" value="ATPase_NBD"/>
</dbReference>
<dbReference type="InterPro" id="IPR012725">
    <property type="entry name" value="Chaperone_DnaK"/>
</dbReference>
<dbReference type="InterPro" id="IPR018181">
    <property type="entry name" value="Heat_shock_70_CS"/>
</dbReference>
<dbReference type="InterPro" id="IPR029048">
    <property type="entry name" value="HSP70_C_sf"/>
</dbReference>
<dbReference type="InterPro" id="IPR029047">
    <property type="entry name" value="HSP70_peptide-bd_sf"/>
</dbReference>
<dbReference type="InterPro" id="IPR013126">
    <property type="entry name" value="Hsp_70_fam"/>
</dbReference>
<dbReference type="NCBIfam" id="NF001413">
    <property type="entry name" value="PRK00290.1"/>
    <property type="match status" value="1"/>
</dbReference>
<dbReference type="NCBIfam" id="NF003520">
    <property type="entry name" value="PRK05183.1"/>
    <property type="match status" value="1"/>
</dbReference>
<dbReference type="NCBIfam" id="TIGR02350">
    <property type="entry name" value="prok_dnaK"/>
    <property type="match status" value="1"/>
</dbReference>
<dbReference type="PANTHER" id="PTHR19375">
    <property type="entry name" value="HEAT SHOCK PROTEIN 70KDA"/>
    <property type="match status" value="1"/>
</dbReference>
<dbReference type="Pfam" id="PF00012">
    <property type="entry name" value="HSP70"/>
    <property type="match status" value="1"/>
</dbReference>
<dbReference type="PRINTS" id="PR00301">
    <property type="entry name" value="HEATSHOCK70"/>
</dbReference>
<dbReference type="SUPFAM" id="SSF53067">
    <property type="entry name" value="Actin-like ATPase domain"/>
    <property type="match status" value="2"/>
</dbReference>
<dbReference type="SUPFAM" id="SSF100934">
    <property type="entry name" value="Heat shock protein 70kD (HSP70), C-terminal subdomain"/>
    <property type="match status" value="1"/>
</dbReference>
<dbReference type="SUPFAM" id="SSF100920">
    <property type="entry name" value="Heat shock protein 70kD (HSP70), peptide-binding domain"/>
    <property type="match status" value="1"/>
</dbReference>
<dbReference type="PROSITE" id="PS00297">
    <property type="entry name" value="HSP70_1"/>
    <property type="match status" value="1"/>
</dbReference>
<dbReference type="PROSITE" id="PS00329">
    <property type="entry name" value="HSP70_2"/>
    <property type="match status" value="1"/>
</dbReference>
<dbReference type="PROSITE" id="PS01036">
    <property type="entry name" value="HSP70_3"/>
    <property type="match status" value="1"/>
</dbReference>
<name>DNAK_SALHS</name>
<comment type="function">
    <text evidence="1">Acts as a chaperone.</text>
</comment>
<comment type="induction">
    <text evidence="1">By stress conditions e.g. heat shock.</text>
</comment>
<comment type="similarity">
    <text evidence="1">Belongs to the heat shock protein 70 family.</text>
</comment>
<organism>
    <name type="scientific">Salmonella heidelberg (strain SL476)</name>
    <dbReference type="NCBI Taxonomy" id="454169"/>
    <lineage>
        <taxon>Bacteria</taxon>
        <taxon>Pseudomonadati</taxon>
        <taxon>Pseudomonadota</taxon>
        <taxon>Gammaproteobacteria</taxon>
        <taxon>Enterobacterales</taxon>
        <taxon>Enterobacteriaceae</taxon>
        <taxon>Salmonella</taxon>
    </lineage>
</organism>
<accession>B4TIB4</accession>
<keyword id="KW-0067">ATP-binding</keyword>
<keyword id="KW-0143">Chaperone</keyword>
<keyword id="KW-0547">Nucleotide-binding</keyword>
<keyword id="KW-0597">Phosphoprotein</keyword>
<keyword id="KW-0346">Stress response</keyword>
<proteinExistence type="inferred from homology"/>
<protein>
    <recommendedName>
        <fullName evidence="1">Chaperone protein DnaK</fullName>
    </recommendedName>
    <alternativeName>
        <fullName evidence="1">HSP70</fullName>
    </alternativeName>
    <alternativeName>
        <fullName evidence="1">Heat shock 70 kDa protein</fullName>
    </alternativeName>
    <alternativeName>
        <fullName evidence="1">Heat shock protein 70</fullName>
    </alternativeName>
</protein>
<feature type="chain" id="PRO_1000119753" description="Chaperone protein DnaK">
    <location>
        <begin position="1"/>
        <end position="638"/>
    </location>
</feature>
<feature type="region of interest" description="Disordered" evidence="2">
    <location>
        <begin position="603"/>
        <end position="638"/>
    </location>
</feature>
<feature type="compositionally biased region" description="Low complexity" evidence="2">
    <location>
        <begin position="603"/>
        <end position="620"/>
    </location>
</feature>
<feature type="modified residue" description="Phosphothreonine; by autocatalysis" evidence="1">
    <location>
        <position position="199"/>
    </location>
</feature>